<proteinExistence type="evidence at protein level"/>
<evidence type="ECO:0000255" key="1"/>
<evidence type="ECO:0000256" key="2">
    <source>
        <dbReference type="SAM" id="MobiDB-lite"/>
    </source>
</evidence>
<evidence type="ECO:0000269" key="3">
    <source>
    </source>
</evidence>
<evidence type="ECO:0000269" key="4">
    <source>
    </source>
</evidence>
<evidence type="ECO:0000269" key="5">
    <source>
    </source>
</evidence>
<evidence type="ECO:0000269" key="6">
    <source>
    </source>
</evidence>
<evidence type="ECO:0000269" key="7">
    <source>
    </source>
</evidence>
<evidence type="ECO:0000269" key="8">
    <source>
    </source>
</evidence>
<evidence type="ECO:0000305" key="9"/>
<evidence type="ECO:0007829" key="10">
    <source>
        <dbReference type="PDB" id="2ZQK"/>
    </source>
</evidence>
<sequence length="558" mass="58022">MPIGNLGHNPNVNNSIPPAPPLPSQTDGAGGRGQLINSTGPLGSRALFTPVRNSMADSGDNRASDVPGLPVNPMRLAASEITLNDGFEVLHDHGPLDTLNRQIGSSVFRVETQEDGKHIAVGQRNGVETSVVLSDQEYARLQSIDPEGKDKFVFTGGRGGAGHAMVTVASDITEARQRILELLEPKGTGESKGAGESKGVGELRESNSGAENTTETQTSTSTSSLRSDPKLWLALGTVATGLIGLAATGIVQALALTPEPDSPTTTDPDAAASATETATRDQLTKEAFQNPDNQKVNIDELGNAIPSGVLKDDVVANIEEQAKAAGEEAKQQAIENNAQAQKKYDEQQAKRQEELKVSSGAGYGLSGALILGGGIGVAVTAALHRKNQPVEQTTTTTTTTTTTSARTVENKPANNTPAQGNVDTPGSEDTMESRRSSMASTSSTFFDTSSIGTVQNPYADVKTSLHDSQVPTSNSNTSVQNMGNTDSVVYSTIQHPPRDTTDNGARLLGNPSAGIQSTYARLALSGGLRHDMGGLTGGSNSAVNTSNNPPAPGSHRFV</sequence>
<organism>
    <name type="scientific">Escherichia coli O157:H7</name>
    <dbReference type="NCBI Taxonomy" id="83334"/>
    <lineage>
        <taxon>Bacteria</taxon>
        <taxon>Pseudomonadati</taxon>
        <taxon>Pseudomonadota</taxon>
        <taxon>Gammaproteobacteria</taxon>
        <taxon>Enterobacterales</taxon>
        <taxon>Enterobacteriaceae</taxon>
        <taxon>Escherichia</taxon>
    </lineage>
</organism>
<reference key="1">
    <citation type="journal article" date="1998" name="Infect. Immun.">
        <title>Molecular evolution of a pathogenicity island from enterohemorrhagic Escherichia coli O157:H7.</title>
        <authorList>
            <person name="Perna N.T."/>
            <person name="Mayhew G.F."/>
            <person name="Posfai G."/>
            <person name="Elliott S."/>
            <person name="Donnenberg M.S."/>
            <person name="Kaper J.B."/>
            <person name="Blattner F.R."/>
        </authorList>
    </citation>
    <scope>NUCLEOTIDE SEQUENCE [GENOMIC DNA]</scope>
    <source>
        <strain>O157:H7 / EDL933 / ATCC 700927 / EHEC</strain>
    </source>
</reference>
<reference key="2">
    <citation type="journal article" date="1999" name="Infect. Immun.">
        <title>Enterohemorrhagic Escherichia coli O157:H7 produces Tir, which is translocated to the host cell membrane but is not tyrosine phosphorylated.</title>
        <authorList>
            <person name="DeVinney R."/>
            <person name="Stein M."/>
            <person name="Reinscheid D."/>
            <person name="Abe A."/>
            <person name="Ruschkowski S."/>
            <person name="Finlay B.B."/>
        </authorList>
    </citation>
    <scope>NUCLEOTIDE SEQUENCE [GENOMIC DNA]</scope>
    <scope>FUNCTION</scope>
    <scope>SUBCELLULAR LOCATION</scope>
    <scope>INTERACTION WITH INTIMIN</scope>
    <scope>DISRUPTION PHENOTYPE</scope>
    <scope>LACK OF TYROSINE PHOSPHORYLATION</scope>
    <source>
        <strain>O157:H7 / 86-24 / EHEC</strain>
    </source>
</reference>
<reference key="3">
    <citation type="submission" date="2009-06" db="EMBL/GenBank/DDBJ databases">
        <authorList>
            <person name="Zhang Y."/>
            <person name="Golds G."/>
            <person name="John S.J."/>
            <person name="Laing C.R."/>
            <person name="Gannon V.P.J."/>
        </authorList>
    </citation>
    <scope>NUCLEOTIDE SEQUENCE [GENOMIC DNA]</scope>
    <source>
        <strain>O157:H7 / 71074</strain>
    </source>
</reference>
<reference key="4">
    <citation type="journal article" date="2001" name="Nature">
        <title>Genome sequence of enterohaemorrhagic Escherichia coli O157:H7.</title>
        <authorList>
            <person name="Perna N.T."/>
            <person name="Plunkett G. III"/>
            <person name="Burland V."/>
            <person name="Mau B."/>
            <person name="Glasner J.D."/>
            <person name="Rose D.J."/>
            <person name="Mayhew G.F."/>
            <person name="Evans P.S."/>
            <person name="Gregor J."/>
            <person name="Kirkpatrick H.A."/>
            <person name="Posfai G."/>
            <person name="Hackett J."/>
            <person name="Klink S."/>
            <person name="Boutin A."/>
            <person name="Shao Y."/>
            <person name="Miller L."/>
            <person name="Grotbeck E.J."/>
            <person name="Davis N.W."/>
            <person name="Lim A."/>
            <person name="Dimalanta E.T."/>
            <person name="Potamousis K."/>
            <person name="Apodaca J."/>
            <person name="Anantharaman T.S."/>
            <person name="Lin J."/>
            <person name="Yen G."/>
            <person name="Schwartz D.C."/>
            <person name="Welch R.A."/>
            <person name="Blattner F.R."/>
        </authorList>
    </citation>
    <scope>NUCLEOTIDE SEQUENCE [LARGE SCALE GENOMIC DNA]</scope>
    <source>
        <strain>O157:H7 / EDL933 / ATCC 700927 / EHEC</strain>
    </source>
</reference>
<reference key="5">
    <citation type="journal article" date="2001" name="DNA Res.">
        <title>Complete genome sequence of enterohemorrhagic Escherichia coli O157:H7 and genomic comparison with a laboratory strain K-12.</title>
        <authorList>
            <person name="Hayashi T."/>
            <person name="Makino K."/>
            <person name="Ohnishi M."/>
            <person name="Kurokawa K."/>
            <person name="Ishii K."/>
            <person name="Yokoyama K."/>
            <person name="Han C.-G."/>
            <person name="Ohtsubo E."/>
            <person name="Nakayama K."/>
            <person name="Murata T."/>
            <person name="Tanaka M."/>
            <person name="Tobe T."/>
            <person name="Iida T."/>
            <person name="Takami H."/>
            <person name="Honda T."/>
            <person name="Sasakawa C."/>
            <person name="Ogasawara N."/>
            <person name="Yasunaga T."/>
            <person name="Kuhara S."/>
            <person name="Shiba T."/>
            <person name="Hattori M."/>
            <person name="Shinagawa H."/>
        </authorList>
    </citation>
    <scope>NUCLEOTIDE SEQUENCE [LARGE SCALE GENOMIC DNA]</scope>
    <source>
        <strain>O157:H7 / Sakai / RIMD 0509952 / EHEC</strain>
    </source>
</reference>
<reference key="6">
    <citation type="journal article" date="1998" name="Mol. Microbiol.">
        <title>EspE, a novel secreted protein of attaching and effacing bacteria, is directly translocated into infected host cells, where it appears as a tyrosine-phosphorylated 90 kDa protein.</title>
        <authorList>
            <person name="Deibel C."/>
            <person name="Kramer S."/>
            <person name="Chakraborty T."/>
            <person name="Ebel F."/>
        </authorList>
    </citation>
    <scope>SUBCELLULAR LOCATION</scope>
    <scope>LACK OF TYROSINE PHOSPHORYLATION</scope>
    <source>
        <strain>O157:H7 / EDL933 / ATCC 700927 / EHEC</strain>
    </source>
</reference>
<reference key="7">
    <citation type="journal article" date="1999" name="Mol. Microbiol.">
        <title>The Tir-binding region of enterohaemorrhagic Escherichia coli intimin is sufficient to trigger actin condensation after bacterial-induced host cell signalling.</title>
        <authorList>
            <person name="Liu H."/>
            <person name="Magoun L."/>
            <person name="Luperchio S."/>
            <person name="Schauer D.B."/>
            <person name="Leong J.M."/>
        </authorList>
    </citation>
    <scope>INTERACTION WITH INTIMIN</scope>
    <source>
        <strain>O157:H7 / EDL933 / ATCC 700927 / EHEC</strain>
    </source>
</reference>
<reference key="8">
    <citation type="journal article" date="2004" name="Cell. Microbiol.">
        <title>Enterohaemorrhagic and enteropathogenic Escherichia coli use different mechanisms for actin pedestal formation that converge on N-WASP.</title>
        <authorList>
            <person name="Lommel S."/>
            <person name="Benesch S."/>
            <person name="Rohde M."/>
            <person name="Wehland J."/>
            <person name="Rottner K."/>
        </authorList>
    </citation>
    <scope>FUNCTION</scope>
    <source>
        <strain>O157:H7 / 86-24 / EHEC</strain>
        <strain>O157:H7 / EDL933 / ATCC 700927 / EHEC</strain>
    </source>
</reference>
<reference key="9">
    <citation type="journal article" date="2006" name="Cell. Microbiol.">
        <title>Enterohaemorrhagic Escherichia coli Tir requires a C-terminal 12-residue peptide to initiate EspF-mediated actin assembly and harbours N-terminal sequences that influence pedestal length.</title>
        <authorList>
            <person name="Campellone K.G."/>
            <person name="Brady M.J."/>
            <person name="Alamares J.G."/>
            <person name="Rowe D.C."/>
            <person name="Skehan B.M."/>
            <person name="Tipper D.J."/>
            <person name="Leong J.M."/>
        </authorList>
    </citation>
    <scope>FUNCTION</scope>
    <scope>SUBCELLULAR LOCATION</scope>
    <scope>DOMAIN</scope>
    <scope>PHOSPHORYLATION</scope>
    <source>
        <strain>O157:H7 / EDL933 / ATCC 700927 / EHEC</strain>
    </source>
</reference>
<reference key="10">
    <citation type="journal article" date="2007" name="Cell. Microbiol.">
        <title>Enterohaemorrhagic and enteropathogenic Escherichia coli Tir proteins trigger a common Nck-independent actin assembly pathway.</title>
        <authorList>
            <person name="Brady M.J."/>
            <person name="Campellone K.G."/>
            <person name="Ghildiyal M."/>
            <person name="Leong J.M."/>
        </authorList>
    </citation>
    <scope>FUNCTION</scope>
    <scope>MUTAGENESIS OF GLY-452; THR-453; VAL-454; GLN-455; ASN-456; PRO-457; TYR-458; ALA-459; ASP-460; VAL-461; LYS-462 AND THR-463</scope>
    <source>
        <strain>O157:H7 / EDL933 / ATCC 700927 / EHEC</strain>
    </source>
</reference>
<reference key="11">
    <citation type="journal article" date="2009" name="Cell Host Microbe">
        <title>IRSp53 links the enterohemorrhagic E. coli effectors Tir and EspFU for actin pedestal formation.</title>
        <authorList>
            <person name="Weiss S.M."/>
            <person name="Ladwein M."/>
            <person name="Schmidt D."/>
            <person name="Ehinger J."/>
            <person name="Lommel S."/>
            <person name="Stading K."/>
            <person name="Beutling U."/>
            <person name="Disanza A."/>
            <person name="Frank R."/>
            <person name="Jansch L."/>
            <person name="Scita G."/>
            <person name="Gunzer F."/>
            <person name="Rottner K."/>
            <person name="Stradal T.E."/>
        </authorList>
    </citation>
    <scope>INTERACTION WITH HOST BAIAP2 AND BAIAP2L1</scope>
    <source>
        <strain>O157:H7 / 86-24 / EHEC</strain>
        <strain>O157:H7 / EDL933 / ATCC 700927 / EHEC</strain>
    </source>
</reference>
<reference key="12">
    <citation type="journal article" date="2010" name="FEBS J.">
        <title>Cytoskeleton-modulating effectors of enteropathogenic and enterohaemorrhagic Escherichia coli: Tir, EspFU and actin pedestal assembly.</title>
        <authorList>
            <person name="Campellone K.G."/>
        </authorList>
    </citation>
    <scope>REVIEW</scope>
</reference>
<reference key="13">
    <citation type="submission" date="2008-12" db="PDB data bank">
        <title>Structural insight into the interaction between intimin and Tir of enterohaemorrhagic E coli: evidence for a dynamic sequential clustering-aggregating-reticulating model.</title>
        <authorList>
            <person name="Ma Y."/>
            <person name="Zou Q."/>
            <person name="Gao G.F."/>
        </authorList>
    </citation>
    <scope>X-RAY CRYSTALLOGRAPHY (2.80 ANGSTROMS) OF 269-336</scope>
    <source>
        <strain>O157:H7 / EDL933 / ATCC 700927 / EHEC</strain>
    </source>
</reference>
<name>TIR_ECO57</name>
<accession>Q7DB77</accession>
<accession>Q7A9Q1</accession>
<accession>Q9R396</accession>
<keyword id="KW-0002">3D-structure</keyword>
<keyword id="KW-1032">Host cell membrane</keyword>
<keyword id="KW-1043">Host membrane</keyword>
<keyword id="KW-0472">Membrane</keyword>
<keyword id="KW-0597">Phosphoprotein</keyword>
<keyword id="KW-0675">Receptor</keyword>
<keyword id="KW-1185">Reference proteome</keyword>
<keyword id="KW-0964">Secreted</keyword>
<keyword id="KW-0812">Transmembrane</keyword>
<keyword id="KW-1133">Transmembrane helix</keyword>
<keyword id="KW-0843">Virulence</keyword>
<dbReference type="EMBL" id="AF071034">
    <property type="protein sequence ID" value="AAC31506.1"/>
    <property type="molecule type" value="Genomic_DNA"/>
</dbReference>
<dbReference type="EMBL" id="AF125993">
    <property type="protein sequence ID" value="AAD29391.1"/>
    <property type="molecule type" value="Genomic_DNA"/>
</dbReference>
<dbReference type="EMBL" id="GQ338312">
    <property type="protein sequence ID" value="ACU09451.1"/>
    <property type="molecule type" value="Genomic_DNA"/>
</dbReference>
<dbReference type="EMBL" id="AE005174">
    <property type="protein sequence ID" value="AAG58825.1"/>
    <property type="molecule type" value="Genomic_DNA"/>
</dbReference>
<dbReference type="EMBL" id="BA000007">
    <property type="protein sequence ID" value="BAB37984.1"/>
    <property type="molecule type" value="Genomic_DNA"/>
</dbReference>
<dbReference type="PIR" id="A98199">
    <property type="entry name" value="A98199"/>
</dbReference>
<dbReference type="PIR" id="E86045">
    <property type="entry name" value="E86045"/>
</dbReference>
<dbReference type="RefSeq" id="NP_312588.1">
    <property type="nucleotide sequence ID" value="NC_002695.1"/>
</dbReference>
<dbReference type="RefSeq" id="WP_001301454.1">
    <property type="nucleotide sequence ID" value="NZ_VOAI01000011.1"/>
</dbReference>
<dbReference type="PDB" id="2ZQK">
    <property type="method" value="X-ray"/>
    <property type="resolution" value="2.80 A"/>
    <property type="chains" value="C/D/M/N=269-336"/>
</dbReference>
<dbReference type="PDB" id="2ZWK">
    <property type="method" value="X-ray"/>
    <property type="resolution" value="3.10 A"/>
    <property type="chains" value="B/D/F=274-336"/>
</dbReference>
<dbReference type="PDBsum" id="2ZQK"/>
<dbReference type="PDBsum" id="2ZWK"/>
<dbReference type="SMR" id="Q7DB77"/>
<dbReference type="IntAct" id="Q7DB77">
    <property type="interactions" value="15"/>
</dbReference>
<dbReference type="MINT" id="Q7DB77"/>
<dbReference type="STRING" id="155864.Z5112"/>
<dbReference type="GeneID" id="915465"/>
<dbReference type="KEGG" id="ece:Z5112"/>
<dbReference type="KEGG" id="ecs:ECs_4561"/>
<dbReference type="PATRIC" id="fig|386585.9.peg.4778"/>
<dbReference type="eggNOG" id="ENOG5033PQE">
    <property type="taxonomic scope" value="Bacteria"/>
</dbReference>
<dbReference type="HOGENOM" id="CLU_497576_0_0_6"/>
<dbReference type="OMA" id="HDKGPLD"/>
<dbReference type="EvolutionaryTrace" id="Q7DB77"/>
<dbReference type="Proteomes" id="UP000000558">
    <property type="component" value="Chromosome"/>
</dbReference>
<dbReference type="Proteomes" id="UP000002519">
    <property type="component" value="Chromosome"/>
</dbReference>
<dbReference type="GO" id="GO:0005576">
    <property type="term" value="C:extracellular region"/>
    <property type="evidence" value="ECO:0007669"/>
    <property type="project" value="UniProtKB-SubCell"/>
</dbReference>
<dbReference type="GO" id="GO:0020002">
    <property type="term" value="C:host cell plasma membrane"/>
    <property type="evidence" value="ECO:0007669"/>
    <property type="project" value="UniProtKB-SubCell"/>
</dbReference>
<dbReference type="GO" id="GO:0016020">
    <property type="term" value="C:membrane"/>
    <property type="evidence" value="ECO:0007669"/>
    <property type="project" value="UniProtKB-KW"/>
</dbReference>
<dbReference type="Gene3D" id="4.10.820.10">
    <property type="entry name" value="Translocated intimin receptor, central domain"/>
    <property type="match status" value="1"/>
</dbReference>
<dbReference type="InterPro" id="IPR037003">
    <property type="entry name" value="Tir_central_sf"/>
</dbReference>
<dbReference type="InterPro" id="IPR022638">
    <property type="entry name" value="Transloc_intimin_rcpt"/>
</dbReference>
<dbReference type="InterPro" id="IPR022639">
    <property type="entry name" value="Transloc_intimin_rcpt_C"/>
</dbReference>
<dbReference type="InterPro" id="IPR003536">
    <property type="entry name" value="Transloc_intimin_rcpt_cen_dom"/>
</dbReference>
<dbReference type="InterPro" id="IPR022633">
    <property type="entry name" value="Transloc_intimin_rcpt_N"/>
</dbReference>
<dbReference type="NCBIfam" id="NF033637">
    <property type="entry name" value="transloc_TIR"/>
    <property type="match status" value="1"/>
</dbReference>
<dbReference type="Pfam" id="PF07489">
    <property type="entry name" value="Tir_receptor_C"/>
    <property type="match status" value="1"/>
</dbReference>
<dbReference type="Pfam" id="PF03549">
    <property type="entry name" value="Tir_receptor_M"/>
    <property type="match status" value="1"/>
</dbReference>
<dbReference type="Pfam" id="PF07490">
    <property type="entry name" value="Tir_receptor_N"/>
    <property type="match status" value="1"/>
</dbReference>
<dbReference type="PRINTS" id="PR01370">
    <property type="entry name" value="TRNSINTIMINR"/>
</dbReference>
<feature type="chain" id="PRO_0000414051" description="Translocated intimin receptor Tir">
    <location>
        <begin position="1"/>
        <end position="558"/>
    </location>
</feature>
<feature type="topological domain" description="Cytoplasmic" evidence="1">
    <location>
        <begin position="1"/>
        <end position="230"/>
    </location>
</feature>
<feature type="transmembrane region" description="Helical" evidence="1">
    <location>
        <begin position="231"/>
        <end position="251"/>
    </location>
</feature>
<feature type="topological domain" description="Extracellular" evidence="1">
    <location>
        <begin position="252"/>
        <end position="362"/>
    </location>
</feature>
<feature type="transmembrane region" description="Helical" evidence="1">
    <location>
        <begin position="363"/>
        <end position="383"/>
    </location>
</feature>
<feature type="topological domain" description="Cytoplasmic" evidence="1">
    <location>
        <begin position="384"/>
        <end position="558"/>
    </location>
</feature>
<feature type="region of interest" description="Disordered" evidence="2">
    <location>
        <begin position="1"/>
        <end position="44"/>
    </location>
</feature>
<feature type="region of interest" description="Disordered" evidence="2">
    <location>
        <begin position="182"/>
        <end position="226"/>
    </location>
</feature>
<feature type="region of interest" description="Disordered" evidence="2">
    <location>
        <begin position="257"/>
        <end position="280"/>
    </location>
</feature>
<feature type="region of interest" description="Disordered" evidence="2">
    <location>
        <begin position="388"/>
        <end position="451"/>
    </location>
</feature>
<feature type="region of interest" description="Disordered" evidence="2">
    <location>
        <begin position="533"/>
        <end position="558"/>
    </location>
</feature>
<feature type="short sequence motif" description="Essential for actin pedestal formation">
    <location>
        <begin position="456"/>
        <end position="458"/>
    </location>
</feature>
<feature type="compositionally biased region" description="Basic and acidic residues" evidence="2">
    <location>
        <begin position="182"/>
        <end position="205"/>
    </location>
</feature>
<feature type="compositionally biased region" description="Low complexity" evidence="2">
    <location>
        <begin position="213"/>
        <end position="224"/>
    </location>
</feature>
<feature type="compositionally biased region" description="Low complexity" evidence="2">
    <location>
        <begin position="257"/>
        <end position="277"/>
    </location>
</feature>
<feature type="compositionally biased region" description="Low complexity" evidence="2">
    <location>
        <begin position="393"/>
        <end position="403"/>
    </location>
</feature>
<feature type="compositionally biased region" description="Polar residues" evidence="2">
    <location>
        <begin position="404"/>
        <end position="424"/>
    </location>
</feature>
<feature type="compositionally biased region" description="Low complexity" evidence="2">
    <location>
        <begin position="436"/>
        <end position="450"/>
    </location>
</feature>
<feature type="compositionally biased region" description="Polar residues" evidence="2">
    <location>
        <begin position="538"/>
        <end position="548"/>
    </location>
</feature>
<feature type="mutagenesis site" description="Does not affect translocation into the host cell, ability to bind intimin and pedestal formation." evidence="7">
    <original>G</original>
    <variation>A</variation>
    <location>
        <position position="452"/>
    </location>
</feature>
<feature type="mutagenesis site" description="Does not affect translocation into the host cell, ability to bind intimin and pedestal formation." evidence="7">
    <original>T</original>
    <variation>A</variation>
    <location>
        <position position="453"/>
    </location>
</feature>
<feature type="mutagenesis site" description="Does not affect translocation into the host cell, ability to bind intimin and pedestal formation." evidence="7">
    <original>V</original>
    <variation>A</variation>
    <location>
        <position position="454"/>
    </location>
</feature>
<feature type="mutagenesis site" description="Does not affect translocation into the host cell, ability to bind intimin and pedestal formation." evidence="7">
    <original>Q</original>
    <variation>A</variation>
    <location>
        <position position="455"/>
    </location>
</feature>
<feature type="mutagenesis site" description="Strong decrease in pedestal formation. Does not affect translocation into the host cell and ability to bind intimin." evidence="7">
    <original>N</original>
    <variation>A</variation>
    <location>
        <position position="456"/>
    </location>
</feature>
<feature type="mutagenesis site" description="Strong decrease in pedestal formation. Does not affect translocation into the host cell and ability to bind intimin." evidence="7">
    <original>P</original>
    <variation>A</variation>
    <location>
        <position position="457"/>
    </location>
</feature>
<feature type="mutagenesis site" description="Strong decrease in pedestal formation. Does not affect translocation into the host cell and ability to bind intimin." evidence="7">
    <original>Y</original>
    <variation>A</variation>
    <location>
        <position position="458"/>
    </location>
</feature>
<feature type="mutagenesis site" description="Slight decrease in pedestal formation. Does not affect translocation into the host cell and ability to bind intimin." evidence="7">
    <original>Y</original>
    <variation>F</variation>
    <location>
        <position position="458"/>
    </location>
</feature>
<feature type="mutagenesis site" description="Does not affect translocation into the host cell, ability to bind intimin and pedestal formation." evidence="7">
    <original>A</original>
    <variation>G</variation>
    <location>
        <position position="459"/>
    </location>
</feature>
<feature type="mutagenesis site" description="Does not affect translocation into the host cell, ability to bind intimin and pedestal formation." evidence="7">
    <original>D</original>
    <variation>A</variation>
    <location>
        <position position="460"/>
    </location>
</feature>
<feature type="mutagenesis site" description="Does not affect translocation into the host cell, ability to bind intimin and pedestal formation." evidence="7">
    <original>V</original>
    <variation>A</variation>
    <location>
        <position position="461"/>
    </location>
</feature>
<feature type="mutagenesis site" description="Does not affect translocation into the host cell, ability to bind intimin and pedestal formation." evidence="7">
    <original>K</original>
    <variation>A</variation>
    <location>
        <position position="462"/>
    </location>
</feature>
<feature type="mutagenesis site" description="Does not affect translocation into the host cell, ability to bind intimin and pedestal formation." evidence="7">
    <original>T</original>
    <variation>A</variation>
    <location>
        <position position="463"/>
    </location>
</feature>
<feature type="helix" evidence="10">
    <location>
        <begin position="274"/>
        <end position="288"/>
    </location>
</feature>
<feature type="helix" evidence="10">
    <location>
        <begin position="291"/>
        <end position="293"/>
    </location>
</feature>
<feature type="strand" evidence="10">
    <location>
        <begin position="294"/>
        <end position="298"/>
    </location>
</feature>
<feature type="strand" evidence="10">
    <location>
        <begin position="304"/>
        <end position="310"/>
    </location>
</feature>
<feature type="helix" evidence="10">
    <location>
        <begin position="312"/>
        <end position="334"/>
    </location>
</feature>
<comment type="function">
    <text evidence="3 5 6 7">Multifunctional protein that is required for efficient pedestal formation in host epithelial cells during infection. The extracellular region acts as a receptor for bacterial intimin, allowing the bacterium to attach tightly to the host-cell surface. Simultaneously, the intracellular region initiates a signaling cascade in the host cell, which leads to actin polymerization and formation of actin pedestals at the sites of bacterial adhesion. In strain EDL933, acts via the effector protein EspF(U), in a phosphotyrosine- and NCK-independent manner. Tir binds to host BAIAP2, which mediates association with EspF(U) and leads to stimulation of actin polymerization.</text>
</comment>
<comment type="subunit">
    <text evidence="3 4 8">Interacts with intimin. Interacts with host BAIAP2 and BAIAP2L1.</text>
</comment>
<comment type="interaction">
    <interactant intactId="EBI-6480811">
        <id>Q7DB77</id>
    </interactant>
    <interactant intactId="EBI-6403832">
        <id>P58233</id>
        <label>cesT</label>
    </interactant>
    <organismsDiffer>false</organismsDiffer>
    <experiments>2</experiments>
</comment>
<comment type="interaction">
    <interactant intactId="EBI-6480811">
        <id>Q7DB77</id>
    </interactant>
    <interactant intactId="EBI-6403821">
        <id>Q7DB79</id>
        <label>sepL</label>
    </interactant>
    <organismsDiffer>false</organismsDiffer>
    <experiments>4</experiments>
</comment>
<comment type="interaction">
    <interactant intactId="EBI-6480811">
        <id>Q7DB77</id>
    </interactant>
    <interactant intactId="EBI-352622">
        <id>P07355</id>
        <label>ANXA2</label>
    </interactant>
    <organismsDiffer>true</organismsDiffer>
    <experiments>2</experiments>
</comment>
<comment type="interaction">
    <interactant intactId="EBI-6480811">
        <id>Q7DB77</id>
    </interactant>
    <interactant intactId="EBI-743313">
        <id>P49407</id>
        <label>ARRB1</label>
    </interactant>
    <organismsDiffer>true</organismsDiffer>
    <experiments>3</experiments>
</comment>
<comment type="interaction">
    <interactant intactId="EBI-6480811">
        <id>Q7DB77</id>
    </interactant>
    <interactant intactId="EBI-525456">
        <id>Q9UQB8</id>
        <label>BAIAP2</label>
    </interactant>
    <organismsDiffer>true</organismsDiffer>
    <experiments>3</experiments>
</comment>
<comment type="interaction">
    <interactant intactId="EBI-6480811">
        <id>Q7DB77</id>
    </interactant>
    <interactant intactId="EBI-6174091">
        <id>Q9UQB8-4</id>
        <label>BAIAP2</label>
    </interactant>
    <organismsDiffer>true</organismsDiffer>
    <experiments>5</experiments>
</comment>
<comment type="interaction">
    <interactant intactId="EBI-6480811">
        <id>Q7DB77</id>
    </interactant>
    <interactant intactId="EBI-2483278">
        <id>Q9UHR4</id>
        <label>BAIAP2L1</label>
    </interactant>
    <organismsDiffer>true</organismsDiffer>
    <experiments>3</experiments>
</comment>
<comment type="interaction">
    <interactant intactId="EBI-6480811">
        <id>Q7DB77</id>
    </interactant>
    <interactant intactId="EBI-397955">
        <id>Q60598</id>
        <label>Cttn</label>
    </interactant>
    <organismsDiffer>true</organismsDiffer>
    <experiments>4</experiments>
</comment>
<comment type="interaction">
    <interactant intactId="EBI-6480811">
        <id>Q7DB77</id>
    </interactant>
    <interactant intactId="EBI-749311">
        <id>P37235</id>
        <label>HPCAL1</label>
    </interactant>
    <organismsDiffer>true</organismsDiffer>
    <experiments>3</experiments>
</comment>
<comment type="interaction">
    <interactant intactId="EBI-6480811">
        <id>Q7DB77</id>
    </interactant>
    <interactant intactId="EBI-744820">
        <id>Q9UM19</id>
        <label>HPCAL4</label>
    </interactant>
    <organismsDiffer>true</organismsDiffer>
    <experiments>3</experiments>
</comment>
<comment type="interaction">
    <interactant intactId="EBI-6480811">
        <id>Q7DB77</id>
    </interactant>
    <interactant intactId="EBI-749635">
        <id>P61601</id>
        <label>NCALD</label>
    </interactant>
    <organismsDiffer>true</organismsDiffer>
    <experiments>3</experiments>
</comment>
<comment type="interaction">
    <interactant intactId="EBI-6480811">
        <id>Q7DB77</id>
    </interactant>
    <interactant intactId="EBI-712685">
        <id>O43924</id>
        <label>PDE6D</label>
    </interactant>
    <organismsDiffer>true</organismsDiffer>
    <experiments>3</experiments>
</comment>
<comment type="interaction">
    <interactant intactId="EBI-6480811">
        <id>Q7DB77</id>
    </interactant>
    <interactant intactId="EBI-78260">
        <id>P29350</id>
        <label>PTPN6</label>
    </interactant>
    <organismsDiffer>true</organismsDiffer>
    <experiments>2</experiments>
</comment>
<comment type="interaction">
    <interactant intactId="EBI-6480811">
        <id>Q7DB77</id>
    </interactant>
    <interactant intactId="EBI-749295">
        <id>O75716</id>
        <label>STK16</label>
    </interactant>
    <organismsDiffer>true</organismsDiffer>
    <experiments>3</experiments>
</comment>
<comment type="subcellular location">
    <subcellularLocation>
        <location>Secreted</location>
    </subcellularLocation>
    <subcellularLocation>
        <location>Host cell membrane</location>
        <topology>Multi-pass membrane protein</topology>
    </subcellularLocation>
    <text>Secreted via the type III secretion system (T3SS). Released into the host cytoplasm via T3SS and then independently inserts into the plasma membrane from a cytoplasmic location. In host cells, localizes to the tip of the actin pedestal.</text>
</comment>
<comment type="domain">
    <text evidence="6">The intracellular N-terminal region contributes to the initiation of actin assembly and influences pedestal length. The central extracellular region is involved in bacterial intimin binding. The intracellular C-terminal region is required for initiation of actin pedestal formation.</text>
</comment>
<comment type="PTM">
    <text evidence="6">Phosphorylated by host kinases.</text>
</comment>
<comment type="disruption phenotype">
    <text evidence="3">Mutants show reduced bacterial adherence to host cells, and a loss of actin condensation beneath bacteria.</text>
</comment>
<comment type="similarity">
    <text evidence="9">Belongs to the Tir receptor family.</text>
</comment>
<protein>
    <recommendedName>
        <fullName>Translocated intimin receptor Tir</fullName>
    </recommendedName>
    <alternativeName>
        <fullName>Secreted effector protein Tir</fullName>
    </alternativeName>
</protein>
<gene>
    <name type="primary">tir</name>
    <name type="synonym">espE</name>
    <name type="ordered locus">Z5112</name>
    <name type="ordered locus">ECs4561</name>
</gene>